<proteinExistence type="evidence at protein level"/>
<evidence type="ECO:0000255" key="1">
    <source>
        <dbReference type="PROSITE-ProRule" id="PRU00388"/>
    </source>
</evidence>
<evidence type="ECO:0000255" key="2">
    <source>
        <dbReference type="PROSITE-ProRule" id="PRU10133"/>
    </source>
</evidence>
<evidence type="ECO:0000269" key="3">
    <source>
    </source>
</evidence>
<evidence type="ECO:0000269" key="4">
    <source>
    </source>
</evidence>
<evidence type="ECO:0000303" key="5">
    <source>
    </source>
</evidence>
<evidence type="ECO:0000303" key="6">
    <source>
    </source>
</evidence>
<evidence type="ECO:0000305" key="7"/>
<sequence length="148" mass="16510">MASKRILKELKDLQKDPPTSCSAGPVAEDMFHWQATIMGPSDSPYSGGVFLVTIHFPPDYPFKPPKVAFRTKVFHPNVNSNGSICLDILKEQWSPALTISKVLLSICSLLTDPNPDDPLVPEIAHMYKTDRAKYESTARSWTQKYAMG</sequence>
<comment type="function">
    <text>Accepts the ubiquitin from the E1 complex and catalyzes its covalent attachment to other proteins.</text>
</comment>
<comment type="catalytic activity">
    <reaction evidence="1 2">
        <text>S-ubiquitinyl-[E1 ubiquitin-activating enzyme]-L-cysteine + [E2 ubiquitin-conjugating enzyme]-L-cysteine = [E1 ubiquitin-activating enzyme]-L-cysteine + S-ubiquitinyl-[E2 ubiquitin-conjugating enzyme]-L-cysteine.</text>
        <dbReference type="EC" id="2.3.2.23"/>
    </reaction>
</comment>
<comment type="pathway">
    <text evidence="1">Protein modification; protein ubiquitination.</text>
</comment>
<comment type="subunit">
    <text evidence="3">Interacts with SINAT5.</text>
</comment>
<comment type="alternative products">
    <event type="alternative splicing"/>
    <isoform>
        <id>Q94F47-1</id>
        <name>1</name>
        <sequence type="displayed"/>
    </isoform>
    <text>A number of isoforms are produced. According to EST sequences.</text>
</comment>
<comment type="tissue specificity">
    <text evidence="4">Expressed in seeds, pistils, siliques, hypocotyls and leaves.</text>
</comment>
<comment type="similarity">
    <text evidence="1">Belongs to the ubiquitin-conjugating enzyme family.</text>
</comment>
<comment type="sequence caution" evidence="7">
    <conflict type="erroneous gene model prediction">
        <sequence resource="EMBL-CDS" id="AAF24583"/>
    </conflict>
</comment>
<gene>
    <name evidence="6" type="primary">UBC28</name>
    <name type="ordered locus">At1g64230</name>
    <name type="ORF">F22C12.2</name>
</gene>
<feature type="chain" id="PRO_0000345193" description="Ubiquitin-conjugating enzyme E2 28">
    <location>
        <begin position="1"/>
        <end position="148"/>
    </location>
</feature>
<feature type="domain" description="UBC core" evidence="1">
    <location>
        <begin position="1"/>
        <end position="147"/>
    </location>
</feature>
<feature type="active site" description="Glycyl thioester intermediate" evidence="1 2">
    <location>
        <position position="85"/>
    </location>
</feature>
<dbReference type="EC" id="2.3.2.23"/>
<dbReference type="EMBL" id="AF480945">
    <property type="protein sequence ID" value="AAM11574.1"/>
    <property type="molecule type" value="mRNA"/>
</dbReference>
<dbReference type="EMBL" id="DQ027041">
    <property type="protein sequence ID" value="AAY44867.1"/>
    <property type="molecule type" value="mRNA"/>
</dbReference>
<dbReference type="EMBL" id="AC007764">
    <property type="protein sequence ID" value="AAF24583.1"/>
    <property type="status" value="ALT_SEQ"/>
    <property type="molecule type" value="Genomic_DNA"/>
</dbReference>
<dbReference type="EMBL" id="CP002684">
    <property type="protein sequence ID" value="AEE34212.1"/>
    <property type="molecule type" value="Genomic_DNA"/>
</dbReference>
<dbReference type="EMBL" id="CP002684">
    <property type="protein sequence ID" value="AEE34213.1"/>
    <property type="molecule type" value="Genomic_DNA"/>
</dbReference>
<dbReference type="EMBL" id="AF385718">
    <property type="protein sequence ID" value="AAK60309.1"/>
    <property type="molecule type" value="mRNA"/>
</dbReference>
<dbReference type="EMBL" id="AY133670">
    <property type="protein sequence ID" value="AAM91500.1"/>
    <property type="molecule type" value="mRNA"/>
</dbReference>
<dbReference type="PIR" id="D96666">
    <property type="entry name" value="D96666"/>
</dbReference>
<dbReference type="RefSeq" id="NP_001031228.1">
    <molecule id="Q94F47-1"/>
    <property type="nucleotide sequence ID" value="NM_001036151.1"/>
</dbReference>
<dbReference type="RefSeq" id="NP_564828.1">
    <molecule id="Q94F47-1"/>
    <property type="nucleotide sequence ID" value="NM_105097.9"/>
</dbReference>
<dbReference type="SMR" id="Q94F47"/>
<dbReference type="BioGRID" id="27949">
    <property type="interactions" value="8"/>
</dbReference>
<dbReference type="FunCoup" id="Q94F47">
    <property type="interactions" value="3414"/>
</dbReference>
<dbReference type="IntAct" id="Q94F47">
    <property type="interactions" value="1"/>
</dbReference>
<dbReference type="STRING" id="3702.Q94F47"/>
<dbReference type="ProteomicsDB" id="242818">
    <molecule id="Q94F47-1"/>
</dbReference>
<dbReference type="EnsemblPlants" id="AT1G64230.1">
    <molecule id="Q94F47-1"/>
    <property type="protein sequence ID" value="AT1G64230.1"/>
    <property type="gene ID" value="AT1G64230"/>
</dbReference>
<dbReference type="EnsemblPlants" id="AT1G64230.2">
    <molecule id="Q94F47-1"/>
    <property type="protein sequence ID" value="AT1G64230.2"/>
    <property type="gene ID" value="AT1G64230"/>
</dbReference>
<dbReference type="GeneID" id="842728"/>
<dbReference type="Gramene" id="AT1G64230.1">
    <molecule id="Q94F47-1"/>
    <property type="protein sequence ID" value="AT1G64230.1"/>
    <property type="gene ID" value="AT1G64230"/>
</dbReference>
<dbReference type="Gramene" id="AT1G64230.2">
    <molecule id="Q94F47-1"/>
    <property type="protein sequence ID" value="AT1G64230.2"/>
    <property type="gene ID" value="AT1G64230"/>
</dbReference>
<dbReference type="KEGG" id="ath:AT1G64230"/>
<dbReference type="Araport" id="AT1G64230"/>
<dbReference type="TAIR" id="AT1G64230">
    <property type="gene designation" value="UBC28"/>
</dbReference>
<dbReference type="HOGENOM" id="CLU_030988_13_3_1"/>
<dbReference type="InParanoid" id="Q94F47"/>
<dbReference type="OMA" id="VHFTTRI"/>
<dbReference type="OrthoDB" id="581474at2759"/>
<dbReference type="PhylomeDB" id="Q94F47"/>
<dbReference type="UniPathway" id="UPA00143"/>
<dbReference type="PRO" id="PR:Q94F47"/>
<dbReference type="Proteomes" id="UP000006548">
    <property type="component" value="Chromosome 1"/>
</dbReference>
<dbReference type="ExpressionAtlas" id="Q94F47">
    <property type="expression patterns" value="baseline and differential"/>
</dbReference>
<dbReference type="GO" id="GO:0005524">
    <property type="term" value="F:ATP binding"/>
    <property type="evidence" value="ECO:0007669"/>
    <property type="project" value="UniProtKB-KW"/>
</dbReference>
<dbReference type="GO" id="GO:0061631">
    <property type="term" value="F:ubiquitin conjugating enzyme activity"/>
    <property type="evidence" value="ECO:0007669"/>
    <property type="project" value="UniProtKB-EC"/>
</dbReference>
<dbReference type="GO" id="GO:0016567">
    <property type="term" value="P:protein ubiquitination"/>
    <property type="evidence" value="ECO:0007669"/>
    <property type="project" value="UniProtKB-UniPathway"/>
</dbReference>
<dbReference type="CDD" id="cd23792">
    <property type="entry name" value="UBCc_UBE2D"/>
    <property type="match status" value="1"/>
</dbReference>
<dbReference type="FunFam" id="3.10.110.10:FF:000001">
    <property type="entry name" value="Ubiquitin-conjugating enzyme 28, E2"/>
    <property type="match status" value="1"/>
</dbReference>
<dbReference type="Gene3D" id="3.10.110.10">
    <property type="entry name" value="Ubiquitin Conjugating Enzyme"/>
    <property type="match status" value="1"/>
</dbReference>
<dbReference type="InterPro" id="IPR000608">
    <property type="entry name" value="UBQ-conjugat_E2_core"/>
</dbReference>
<dbReference type="InterPro" id="IPR023313">
    <property type="entry name" value="UBQ-conjugating_AS"/>
</dbReference>
<dbReference type="InterPro" id="IPR016135">
    <property type="entry name" value="UBQ-conjugating_enzyme/RWD"/>
</dbReference>
<dbReference type="PANTHER" id="PTHR24068">
    <property type="entry name" value="UBIQUITIN-CONJUGATING ENZYME E2"/>
    <property type="match status" value="1"/>
</dbReference>
<dbReference type="Pfam" id="PF00179">
    <property type="entry name" value="UQ_con"/>
    <property type="match status" value="1"/>
</dbReference>
<dbReference type="SMART" id="SM00212">
    <property type="entry name" value="UBCc"/>
    <property type="match status" value="1"/>
</dbReference>
<dbReference type="SUPFAM" id="SSF54495">
    <property type="entry name" value="UBC-like"/>
    <property type="match status" value="1"/>
</dbReference>
<dbReference type="PROSITE" id="PS00183">
    <property type="entry name" value="UBC_1"/>
    <property type="match status" value="1"/>
</dbReference>
<dbReference type="PROSITE" id="PS50127">
    <property type="entry name" value="UBC_2"/>
    <property type="match status" value="1"/>
</dbReference>
<accession>Q94F47</accession>
<accession>Q9SH72</accession>
<organism>
    <name type="scientific">Arabidopsis thaliana</name>
    <name type="common">Mouse-ear cress</name>
    <dbReference type="NCBI Taxonomy" id="3702"/>
    <lineage>
        <taxon>Eukaryota</taxon>
        <taxon>Viridiplantae</taxon>
        <taxon>Streptophyta</taxon>
        <taxon>Embryophyta</taxon>
        <taxon>Tracheophyta</taxon>
        <taxon>Spermatophyta</taxon>
        <taxon>Magnoliopsida</taxon>
        <taxon>eudicotyledons</taxon>
        <taxon>Gunneridae</taxon>
        <taxon>Pentapetalae</taxon>
        <taxon>rosids</taxon>
        <taxon>malvids</taxon>
        <taxon>Brassicales</taxon>
        <taxon>Brassicaceae</taxon>
        <taxon>Camelineae</taxon>
        <taxon>Arabidopsis</taxon>
    </lineage>
</organism>
<reference key="1">
    <citation type="journal article" date="2002" name="Nature">
        <title>SINAT5 promotes ubiquitin-related degradation of NAC1 to attenuate auxin signals.</title>
        <authorList>
            <person name="Xie Q."/>
            <person name="Guo H.-S."/>
            <person name="Dallman G."/>
            <person name="Fang S."/>
            <person name="Weissman A.M."/>
            <person name="Chua N.-H."/>
        </authorList>
    </citation>
    <scope>NUCLEOTIDE SEQUENCE [MRNA]</scope>
    <scope>INTERACTION WITH SINAT5</scope>
</reference>
<reference key="2">
    <citation type="journal article" date="2005" name="Plant Physiol.">
        <title>Genome analysis and functional characterization of the E2 and RING-type E3 ligase ubiquitination enzymes of Arabidopsis.</title>
        <authorList>
            <person name="Kraft E."/>
            <person name="Stone S.L."/>
            <person name="Ma L."/>
            <person name="Su N."/>
            <person name="Gao Y."/>
            <person name="Lau O.-S."/>
            <person name="Deng X.-W."/>
            <person name="Callis J."/>
        </authorList>
    </citation>
    <scope>NUCLEOTIDE SEQUENCE [MRNA]</scope>
    <scope>TISSUE SPECIFICITY</scope>
    <scope>GENE FAMILY</scope>
    <scope>NOMENCLATURE</scope>
</reference>
<reference key="3">
    <citation type="journal article" date="2000" name="Nature">
        <title>Sequence and analysis of chromosome 1 of the plant Arabidopsis thaliana.</title>
        <authorList>
            <person name="Theologis A."/>
            <person name="Ecker J.R."/>
            <person name="Palm C.J."/>
            <person name="Federspiel N.A."/>
            <person name="Kaul S."/>
            <person name="White O."/>
            <person name="Alonso J."/>
            <person name="Altafi H."/>
            <person name="Araujo R."/>
            <person name="Bowman C.L."/>
            <person name="Brooks S.Y."/>
            <person name="Buehler E."/>
            <person name="Chan A."/>
            <person name="Chao Q."/>
            <person name="Chen H."/>
            <person name="Cheuk R.F."/>
            <person name="Chin C.W."/>
            <person name="Chung M.K."/>
            <person name="Conn L."/>
            <person name="Conway A.B."/>
            <person name="Conway A.R."/>
            <person name="Creasy T.H."/>
            <person name="Dewar K."/>
            <person name="Dunn P."/>
            <person name="Etgu P."/>
            <person name="Feldblyum T.V."/>
            <person name="Feng J.-D."/>
            <person name="Fong B."/>
            <person name="Fujii C.Y."/>
            <person name="Gill J.E."/>
            <person name="Goldsmith A.D."/>
            <person name="Haas B."/>
            <person name="Hansen N.F."/>
            <person name="Hughes B."/>
            <person name="Huizar L."/>
            <person name="Hunter J.L."/>
            <person name="Jenkins J."/>
            <person name="Johnson-Hopson C."/>
            <person name="Khan S."/>
            <person name="Khaykin E."/>
            <person name="Kim C.J."/>
            <person name="Koo H.L."/>
            <person name="Kremenetskaia I."/>
            <person name="Kurtz D.B."/>
            <person name="Kwan A."/>
            <person name="Lam B."/>
            <person name="Langin-Hooper S."/>
            <person name="Lee A."/>
            <person name="Lee J.M."/>
            <person name="Lenz C.A."/>
            <person name="Li J.H."/>
            <person name="Li Y.-P."/>
            <person name="Lin X."/>
            <person name="Liu S.X."/>
            <person name="Liu Z.A."/>
            <person name="Luros J.S."/>
            <person name="Maiti R."/>
            <person name="Marziali A."/>
            <person name="Militscher J."/>
            <person name="Miranda M."/>
            <person name="Nguyen M."/>
            <person name="Nierman W.C."/>
            <person name="Osborne B.I."/>
            <person name="Pai G."/>
            <person name="Peterson J."/>
            <person name="Pham P.K."/>
            <person name="Rizzo M."/>
            <person name="Rooney T."/>
            <person name="Rowley D."/>
            <person name="Sakano H."/>
            <person name="Salzberg S.L."/>
            <person name="Schwartz J.R."/>
            <person name="Shinn P."/>
            <person name="Southwick A.M."/>
            <person name="Sun H."/>
            <person name="Tallon L.J."/>
            <person name="Tambunga G."/>
            <person name="Toriumi M.J."/>
            <person name="Town C.D."/>
            <person name="Utterback T."/>
            <person name="Van Aken S."/>
            <person name="Vaysberg M."/>
            <person name="Vysotskaia V.S."/>
            <person name="Walker M."/>
            <person name="Wu D."/>
            <person name="Yu G."/>
            <person name="Fraser C.M."/>
            <person name="Venter J.C."/>
            <person name="Davis R.W."/>
        </authorList>
    </citation>
    <scope>NUCLEOTIDE SEQUENCE [LARGE SCALE GENOMIC DNA]</scope>
    <source>
        <strain>cv. Columbia</strain>
    </source>
</reference>
<reference key="4">
    <citation type="journal article" date="2017" name="Plant J.">
        <title>Araport11: a complete reannotation of the Arabidopsis thaliana reference genome.</title>
        <authorList>
            <person name="Cheng C.Y."/>
            <person name="Krishnakumar V."/>
            <person name="Chan A.P."/>
            <person name="Thibaud-Nissen F."/>
            <person name="Schobel S."/>
            <person name="Town C.D."/>
        </authorList>
    </citation>
    <scope>GENOME REANNOTATION</scope>
    <source>
        <strain>cv. Columbia</strain>
    </source>
</reference>
<reference key="5">
    <citation type="journal article" date="2003" name="Science">
        <title>Empirical analysis of transcriptional activity in the Arabidopsis genome.</title>
        <authorList>
            <person name="Yamada K."/>
            <person name="Lim J."/>
            <person name="Dale J.M."/>
            <person name="Chen H."/>
            <person name="Shinn P."/>
            <person name="Palm C.J."/>
            <person name="Southwick A.M."/>
            <person name="Wu H.C."/>
            <person name="Kim C.J."/>
            <person name="Nguyen M."/>
            <person name="Pham P.K."/>
            <person name="Cheuk R.F."/>
            <person name="Karlin-Newmann G."/>
            <person name="Liu S.X."/>
            <person name="Lam B."/>
            <person name="Sakano H."/>
            <person name="Wu T."/>
            <person name="Yu G."/>
            <person name="Miranda M."/>
            <person name="Quach H.L."/>
            <person name="Tripp M."/>
            <person name="Chang C.H."/>
            <person name="Lee J.M."/>
            <person name="Toriumi M.J."/>
            <person name="Chan M.M."/>
            <person name="Tang C.C."/>
            <person name="Onodera C.S."/>
            <person name="Deng J.M."/>
            <person name="Akiyama K."/>
            <person name="Ansari Y."/>
            <person name="Arakawa T."/>
            <person name="Banh J."/>
            <person name="Banno F."/>
            <person name="Bowser L."/>
            <person name="Brooks S.Y."/>
            <person name="Carninci P."/>
            <person name="Chao Q."/>
            <person name="Choy N."/>
            <person name="Enju A."/>
            <person name="Goldsmith A.D."/>
            <person name="Gurjal M."/>
            <person name="Hansen N.F."/>
            <person name="Hayashizaki Y."/>
            <person name="Johnson-Hopson C."/>
            <person name="Hsuan V.W."/>
            <person name="Iida K."/>
            <person name="Karnes M."/>
            <person name="Khan S."/>
            <person name="Koesema E."/>
            <person name="Ishida J."/>
            <person name="Jiang P.X."/>
            <person name="Jones T."/>
            <person name="Kawai J."/>
            <person name="Kamiya A."/>
            <person name="Meyers C."/>
            <person name="Nakajima M."/>
            <person name="Narusaka M."/>
            <person name="Seki M."/>
            <person name="Sakurai T."/>
            <person name="Satou M."/>
            <person name="Tamse R."/>
            <person name="Vaysberg M."/>
            <person name="Wallender E.K."/>
            <person name="Wong C."/>
            <person name="Yamamura Y."/>
            <person name="Yuan S."/>
            <person name="Shinozaki K."/>
            <person name="Davis R.W."/>
            <person name="Theologis A."/>
            <person name="Ecker J.R."/>
        </authorList>
    </citation>
    <scope>NUCLEOTIDE SEQUENCE [LARGE SCALE MRNA]</scope>
    <source>
        <strain>cv. Columbia</strain>
    </source>
</reference>
<protein>
    <recommendedName>
        <fullName>Ubiquitin-conjugating enzyme E2 28</fullName>
        <ecNumber>2.3.2.23</ecNumber>
    </recommendedName>
    <alternativeName>
        <fullName evidence="5">AtUBC9A</fullName>
    </alternativeName>
    <alternativeName>
        <fullName>E2 ubiquitin-conjugating enzyme 28</fullName>
    </alternativeName>
    <alternativeName>
        <fullName>Ubiquitin carrier protein 28</fullName>
    </alternativeName>
</protein>
<keyword id="KW-0025">Alternative splicing</keyword>
<keyword id="KW-0067">ATP-binding</keyword>
<keyword id="KW-0547">Nucleotide-binding</keyword>
<keyword id="KW-1185">Reference proteome</keyword>
<keyword id="KW-0808">Transferase</keyword>
<keyword id="KW-0833">Ubl conjugation pathway</keyword>
<name>UBC28_ARATH</name>